<keyword id="KW-0210">Decarboxylase</keyword>
<keyword id="KW-0456">Lyase</keyword>
<keyword id="KW-0665">Pyrimidine biosynthesis</keyword>
<organism>
    <name type="scientific">Geobacillus thermodenitrificans (strain NG80-2)</name>
    <dbReference type="NCBI Taxonomy" id="420246"/>
    <lineage>
        <taxon>Bacteria</taxon>
        <taxon>Bacillati</taxon>
        <taxon>Bacillota</taxon>
        <taxon>Bacilli</taxon>
        <taxon>Bacillales</taxon>
        <taxon>Anoxybacillaceae</taxon>
        <taxon>Geobacillus</taxon>
    </lineage>
</organism>
<protein>
    <recommendedName>
        <fullName evidence="1">Orotidine 5'-phosphate decarboxylase</fullName>
        <ecNumber evidence="1">4.1.1.23</ecNumber>
    </recommendedName>
    <alternativeName>
        <fullName evidence="1">OMP decarboxylase</fullName>
        <shortName evidence="1">OMPDCase</shortName>
        <shortName evidence="1">OMPdecase</shortName>
    </alternativeName>
</protein>
<sequence length="239" mass="26022">MHTPFIVALDFPSKHDVQQFLRPFSGTPLFVKVGMELYYQEGPAIIAMFKEQGHAVFLDLKLHDIPNTVKQAMKGLARLGVDLVNVHAAGGRRMMEAAIEGLDAGTPSGAARPRCIAVTQLTSTDERMLHEELWISQPLEETVSHYAALAQASGMDGVVCSANEATLIKERCGASFLAVTPGIRFADDSVHDQVRVVTPRKARALGADYIVIGRSITRAADPLAAYSRLQHEWNGGETE</sequence>
<reference key="1">
    <citation type="journal article" date="2007" name="Proc. Natl. Acad. Sci. U.S.A.">
        <title>Genome and proteome of long-chain alkane degrading Geobacillus thermodenitrificans NG80-2 isolated from a deep-subsurface oil reservoir.</title>
        <authorList>
            <person name="Feng L."/>
            <person name="Wang W."/>
            <person name="Cheng J."/>
            <person name="Ren Y."/>
            <person name="Zhao G."/>
            <person name="Gao C."/>
            <person name="Tang Y."/>
            <person name="Liu X."/>
            <person name="Han W."/>
            <person name="Peng X."/>
            <person name="Liu R."/>
            <person name="Wang L."/>
        </authorList>
    </citation>
    <scope>NUCLEOTIDE SEQUENCE [LARGE SCALE GENOMIC DNA]</scope>
    <source>
        <strain>NG80-2</strain>
    </source>
</reference>
<feature type="chain" id="PRO_1000065910" description="Orotidine 5'-phosphate decarboxylase">
    <location>
        <begin position="1"/>
        <end position="239"/>
    </location>
</feature>
<feature type="active site" description="Proton donor" evidence="1">
    <location>
        <position position="61"/>
    </location>
</feature>
<feature type="binding site" evidence="1">
    <location>
        <position position="10"/>
    </location>
    <ligand>
        <name>substrate</name>
    </ligand>
</feature>
<feature type="binding site" evidence="1">
    <location>
        <position position="32"/>
    </location>
    <ligand>
        <name>substrate</name>
    </ligand>
</feature>
<feature type="binding site" evidence="1">
    <location>
        <begin position="59"/>
        <end position="68"/>
    </location>
    <ligand>
        <name>substrate</name>
    </ligand>
</feature>
<feature type="binding site" evidence="1">
    <location>
        <position position="122"/>
    </location>
    <ligand>
        <name>substrate</name>
    </ligand>
</feature>
<feature type="binding site" evidence="1">
    <location>
        <position position="184"/>
    </location>
    <ligand>
        <name>substrate</name>
    </ligand>
</feature>
<feature type="binding site" evidence="1">
    <location>
        <position position="193"/>
    </location>
    <ligand>
        <name>substrate</name>
    </ligand>
</feature>
<feature type="binding site" evidence="1">
    <location>
        <position position="213"/>
    </location>
    <ligand>
        <name>substrate</name>
    </ligand>
</feature>
<feature type="binding site" evidence="1">
    <location>
        <position position="214"/>
    </location>
    <ligand>
        <name>substrate</name>
    </ligand>
</feature>
<dbReference type="EC" id="4.1.1.23" evidence="1"/>
<dbReference type="EMBL" id="CP000557">
    <property type="protein sequence ID" value="ABO66390.1"/>
    <property type="molecule type" value="Genomic_DNA"/>
</dbReference>
<dbReference type="RefSeq" id="WP_008878653.1">
    <property type="nucleotide sequence ID" value="NC_009328.1"/>
</dbReference>
<dbReference type="SMR" id="A4IM36"/>
<dbReference type="GeneID" id="87621395"/>
<dbReference type="KEGG" id="gtn:GTNG_1012"/>
<dbReference type="eggNOG" id="COG0284">
    <property type="taxonomic scope" value="Bacteria"/>
</dbReference>
<dbReference type="HOGENOM" id="CLU_067069_1_1_9"/>
<dbReference type="UniPathway" id="UPA00070">
    <property type="reaction ID" value="UER00120"/>
</dbReference>
<dbReference type="Proteomes" id="UP000001578">
    <property type="component" value="Chromosome"/>
</dbReference>
<dbReference type="GO" id="GO:0005829">
    <property type="term" value="C:cytosol"/>
    <property type="evidence" value="ECO:0007669"/>
    <property type="project" value="TreeGrafter"/>
</dbReference>
<dbReference type="GO" id="GO:0004590">
    <property type="term" value="F:orotidine-5'-phosphate decarboxylase activity"/>
    <property type="evidence" value="ECO:0007669"/>
    <property type="project" value="UniProtKB-UniRule"/>
</dbReference>
<dbReference type="GO" id="GO:0006207">
    <property type="term" value="P:'de novo' pyrimidine nucleobase biosynthetic process"/>
    <property type="evidence" value="ECO:0007669"/>
    <property type="project" value="InterPro"/>
</dbReference>
<dbReference type="GO" id="GO:0044205">
    <property type="term" value="P:'de novo' UMP biosynthetic process"/>
    <property type="evidence" value="ECO:0007669"/>
    <property type="project" value="UniProtKB-UniRule"/>
</dbReference>
<dbReference type="CDD" id="cd04725">
    <property type="entry name" value="OMP_decarboxylase_like"/>
    <property type="match status" value="1"/>
</dbReference>
<dbReference type="FunFam" id="3.20.20.70:FF:000015">
    <property type="entry name" value="Orotidine 5'-phosphate decarboxylase"/>
    <property type="match status" value="1"/>
</dbReference>
<dbReference type="Gene3D" id="3.20.20.70">
    <property type="entry name" value="Aldolase class I"/>
    <property type="match status" value="1"/>
</dbReference>
<dbReference type="HAMAP" id="MF_01200_B">
    <property type="entry name" value="OMPdecase_type1_B"/>
    <property type="match status" value="1"/>
</dbReference>
<dbReference type="InterPro" id="IPR013785">
    <property type="entry name" value="Aldolase_TIM"/>
</dbReference>
<dbReference type="InterPro" id="IPR014732">
    <property type="entry name" value="OMPdecase"/>
</dbReference>
<dbReference type="InterPro" id="IPR018089">
    <property type="entry name" value="OMPdecase_AS"/>
</dbReference>
<dbReference type="InterPro" id="IPR047596">
    <property type="entry name" value="OMPdecase_bac"/>
</dbReference>
<dbReference type="InterPro" id="IPR001754">
    <property type="entry name" value="OMPdeCOase_dom"/>
</dbReference>
<dbReference type="InterPro" id="IPR011060">
    <property type="entry name" value="RibuloseP-bd_barrel"/>
</dbReference>
<dbReference type="NCBIfam" id="NF001273">
    <property type="entry name" value="PRK00230.1"/>
    <property type="match status" value="1"/>
</dbReference>
<dbReference type="NCBIfam" id="TIGR01740">
    <property type="entry name" value="pyrF"/>
    <property type="match status" value="1"/>
</dbReference>
<dbReference type="PANTHER" id="PTHR32119">
    <property type="entry name" value="OROTIDINE 5'-PHOSPHATE DECARBOXYLASE"/>
    <property type="match status" value="1"/>
</dbReference>
<dbReference type="PANTHER" id="PTHR32119:SF2">
    <property type="entry name" value="OROTIDINE 5'-PHOSPHATE DECARBOXYLASE"/>
    <property type="match status" value="1"/>
</dbReference>
<dbReference type="Pfam" id="PF00215">
    <property type="entry name" value="OMPdecase"/>
    <property type="match status" value="1"/>
</dbReference>
<dbReference type="SMART" id="SM00934">
    <property type="entry name" value="OMPdecase"/>
    <property type="match status" value="1"/>
</dbReference>
<dbReference type="SUPFAM" id="SSF51366">
    <property type="entry name" value="Ribulose-phoshate binding barrel"/>
    <property type="match status" value="1"/>
</dbReference>
<dbReference type="PROSITE" id="PS00156">
    <property type="entry name" value="OMPDECASE"/>
    <property type="match status" value="1"/>
</dbReference>
<evidence type="ECO:0000255" key="1">
    <source>
        <dbReference type="HAMAP-Rule" id="MF_01200"/>
    </source>
</evidence>
<gene>
    <name evidence="1" type="primary">pyrF</name>
    <name type="ordered locus">GTNG_1012</name>
</gene>
<comment type="function">
    <text evidence="1">Catalyzes the decarboxylation of orotidine 5'-monophosphate (OMP) to uridine 5'-monophosphate (UMP).</text>
</comment>
<comment type="catalytic activity">
    <reaction evidence="1">
        <text>orotidine 5'-phosphate + H(+) = UMP + CO2</text>
        <dbReference type="Rhea" id="RHEA:11596"/>
        <dbReference type="ChEBI" id="CHEBI:15378"/>
        <dbReference type="ChEBI" id="CHEBI:16526"/>
        <dbReference type="ChEBI" id="CHEBI:57538"/>
        <dbReference type="ChEBI" id="CHEBI:57865"/>
        <dbReference type="EC" id="4.1.1.23"/>
    </reaction>
</comment>
<comment type="pathway">
    <text evidence="1">Pyrimidine metabolism; UMP biosynthesis via de novo pathway; UMP from orotate: step 2/2.</text>
</comment>
<comment type="subunit">
    <text evidence="1">Homodimer.</text>
</comment>
<comment type="similarity">
    <text evidence="1">Belongs to the OMP decarboxylase family. Type 1 subfamily.</text>
</comment>
<proteinExistence type="inferred from homology"/>
<accession>A4IM36</accession>
<name>PYRF_GEOTN</name>